<accession>Q3J9G2</accession>
<gene>
    <name evidence="1" type="primary">hslO</name>
    <name type="ordered locus">Noc_2074</name>
</gene>
<sequence length="289" mass="32657">MNNRDNLHRFLFEEAKIRGELVQLDASWRAVLACHDYPAVVQSQLGQALAATILLSATIKFKGSLILQTQSEGPLQTLVAQATHHRTLRGLARWDGDVPHGSLSETYGSGRLALTIQTEGKNPYQGIVSLEGVNLAEALQTYFSRSEQLRTRLWLVADEQQAVGLFLQELPSQQGHKTDWERIALLASTVTTQEMLSLPSTELLYRLFNEEQVRLFEPEPVSFRCGCSRGRIEQTLAALGREEMESILKEQGIIEVDCEFCNRHYNFDRVDMEQLFTEQVKAPVTSTRH</sequence>
<evidence type="ECO:0000255" key="1">
    <source>
        <dbReference type="HAMAP-Rule" id="MF_00117"/>
    </source>
</evidence>
<name>HSLO_NITOC</name>
<comment type="function">
    <text evidence="1">Redox regulated molecular chaperone. Protects both thermally unfolding and oxidatively damaged proteins from irreversible aggregation. Plays an important role in the bacterial defense system toward oxidative stress.</text>
</comment>
<comment type="subcellular location">
    <subcellularLocation>
        <location evidence="1">Cytoplasm</location>
    </subcellularLocation>
</comment>
<comment type="PTM">
    <text evidence="1">Under oxidizing conditions two disulfide bonds are formed involving the reactive cysteines. Under reducing conditions zinc is bound to the reactive cysteines and the protein is inactive.</text>
</comment>
<comment type="similarity">
    <text evidence="1">Belongs to the HSP33 family.</text>
</comment>
<organism>
    <name type="scientific">Nitrosococcus oceani (strain ATCC 19707 / BCRC 17464 / JCM 30415 / NCIMB 11848 / C-107)</name>
    <dbReference type="NCBI Taxonomy" id="323261"/>
    <lineage>
        <taxon>Bacteria</taxon>
        <taxon>Pseudomonadati</taxon>
        <taxon>Pseudomonadota</taxon>
        <taxon>Gammaproteobacteria</taxon>
        <taxon>Chromatiales</taxon>
        <taxon>Chromatiaceae</taxon>
        <taxon>Nitrosococcus</taxon>
    </lineage>
</organism>
<proteinExistence type="inferred from homology"/>
<feature type="chain" id="PRO_0000238077" description="33 kDa chaperonin">
    <location>
        <begin position="1"/>
        <end position="289"/>
    </location>
</feature>
<feature type="disulfide bond" description="Redox-active" evidence="1">
    <location>
        <begin position="225"/>
        <end position="227"/>
    </location>
</feature>
<feature type="disulfide bond" description="Redox-active" evidence="1">
    <location>
        <begin position="258"/>
        <end position="261"/>
    </location>
</feature>
<keyword id="KW-0143">Chaperone</keyword>
<keyword id="KW-0963">Cytoplasm</keyword>
<keyword id="KW-1015">Disulfide bond</keyword>
<keyword id="KW-0676">Redox-active center</keyword>
<keyword id="KW-1185">Reference proteome</keyword>
<keyword id="KW-0862">Zinc</keyword>
<protein>
    <recommendedName>
        <fullName evidence="1">33 kDa chaperonin</fullName>
    </recommendedName>
    <alternativeName>
        <fullName evidence="1">Heat shock protein 33 homolog</fullName>
        <shortName evidence="1">HSP33</shortName>
    </alternativeName>
</protein>
<dbReference type="EMBL" id="CP000127">
    <property type="protein sequence ID" value="ABA58534.1"/>
    <property type="molecule type" value="Genomic_DNA"/>
</dbReference>
<dbReference type="RefSeq" id="WP_002811063.1">
    <property type="nucleotide sequence ID" value="NC_007484.1"/>
</dbReference>
<dbReference type="SMR" id="Q3J9G2"/>
<dbReference type="FunCoup" id="Q3J9G2">
    <property type="interactions" value="267"/>
</dbReference>
<dbReference type="STRING" id="323261.Noc_2074"/>
<dbReference type="KEGG" id="noc:Noc_2074"/>
<dbReference type="eggNOG" id="COG1281">
    <property type="taxonomic scope" value="Bacteria"/>
</dbReference>
<dbReference type="HOGENOM" id="CLU_054493_0_0_6"/>
<dbReference type="InParanoid" id="Q3J9G2"/>
<dbReference type="Proteomes" id="UP000006838">
    <property type="component" value="Chromosome"/>
</dbReference>
<dbReference type="GO" id="GO:0005737">
    <property type="term" value="C:cytoplasm"/>
    <property type="evidence" value="ECO:0007669"/>
    <property type="project" value="UniProtKB-SubCell"/>
</dbReference>
<dbReference type="GO" id="GO:0044183">
    <property type="term" value="F:protein folding chaperone"/>
    <property type="evidence" value="ECO:0007669"/>
    <property type="project" value="TreeGrafter"/>
</dbReference>
<dbReference type="GO" id="GO:0051082">
    <property type="term" value="F:unfolded protein binding"/>
    <property type="evidence" value="ECO:0007669"/>
    <property type="project" value="UniProtKB-UniRule"/>
</dbReference>
<dbReference type="GO" id="GO:0042026">
    <property type="term" value="P:protein refolding"/>
    <property type="evidence" value="ECO:0007669"/>
    <property type="project" value="TreeGrafter"/>
</dbReference>
<dbReference type="CDD" id="cd00498">
    <property type="entry name" value="Hsp33"/>
    <property type="match status" value="1"/>
</dbReference>
<dbReference type="Gene3D" id="1.10.287.480">
    <property type="entry name" value="helix hairpin bin"/>
    <property type="match status" value="1"/>
</dbReference>
<dbReference type="Gene3D" id="3.55.30.10">
    <property type="entry name" value="Hsp33 domain"/>
    <property type="match status" value="1"/>
</dbReference>
<dbReference type="Gene3D" id="3.90.1280.10">
    <property type="entry name" value="HSP33 redox switch-like"/>
    <property type="match status" value="1"/>
</dbReference>
<dbReference type="HAMAP" id="MF_00117">
    <property type="entry name" value="HslO"/>
    <property type="match status" value="1"/>
</dbReference>
<dbReference type="InterPro" id="IPR000397">
    <property type="entry name" value="Heat_shock_Hsp33"/>
</dbReference>
<dbReference type="InterPro" id="IPR016154">
    <property type="entry name" value="Heat_shock_Hsp33_C"/>
</dbReference>
<dbReference type="InterPro" id="IPR016153">
    <property type="entry name" value="Heat_shock_Hsp33_N"/>
</dbReference>
<dbReference type="InterPro" id="IPR023212">
    <property type="entry name" value="Hsp33_helix_hairpin_bin_dom_sf"/>
</dbReference>
<dbReference type="NCBIfam" id="NF001033">
    <property type="entry name" value="PRK00114.1"/>
    <property type="match status" value="1"/>
</dbReference>
<dbReference type="PANTHER" id="PTHR30111">
    <property type="entry name" value="33 KDA CHAPERONIN"/>
    <property type="match status" value="1"/>
</dbReference>
<dbReference type="PANTHER" id="PTHR30111:SF1">
    <property type="entry name" value="33 KDA CHAPERONIN"/>
    <property type="match status" value="1"/>
</dbReference>
<dbReference type="Pfam" id="PF01430">
    <property type="entry name" value="HSP33"/>
    <property type="match status" value="1"/>
</dbReference>
<dbReference type="PIRSF" id="PIRSF005261">
    <property type="entry name" value="Heat_shock_Hsp33"/>
    <property type="match status" value="1"/>
</dbReference>
<dbReference type="SUPFAM" id="SSF64397">
    <property type="entry name" value="Hsp33 domain"/>
    <property type="match status" value="1"/>
</dbReference>
<dbReference type="SUPFAM" id="SSF118352">
    <property type="entry name" value="HSP33 redox switch-like"/>
    <property type="match status" value="1"/>
</dbReference>
<reference key="1">
    <citation type="journal article" date="2006" name="Appl. Environ. Microbiol.">
        <title>Complete genome sequence of the marine, chemolithoautotrophic, ammonia-oxidizing bacterium Nitrosococcus oceani ATCC 19707.</title>
        <authorList>
            <person name="Klotz M.G."/>
            <person name="Arp D.J."/>
            <person name="Chain P.S.G."/>
            <person name="El-Sheikh A.F."/>
            <person name="Hauser L.J."/>
            <person name="Hommes N.G."/>
            <person name="Larimer F.W."/>
            <person name="Malfatti S.A."/>
            <person name="Norton J.M."/>
            <person name="Poret-Peterson A.T."/>
            <person name="Vergez L.M."/>
            <person name="Ward B.B."/>
        </authorList>
    </citation>
    <scope>NUCLEOTIDE SEQUENCE [LARGE SCALE GENOMIC DNA]</scope>
    <source>
        <strain>ATCC 19707 / BCRC 17464 / JCM 30415 / NCIMB 11848 / C-107</strain>
    </source>
</reference>